<reference key="1">
    <citation type="journal article" date="1995" name="J. Biol. Chem.">
        <title>The precursors of the bee venom constituents apamin and MCD peptide are encoded by two genes in tandem which share the same 3'-exon.</title>
        <authorList>
            <person name="Gmachl M."/>
            <person name="Kreil G."/>
        </authorList>
    </citation>
    <scope>NUCLEOTIDE SEQUENCE [MRNA]</scope>
    <scope>AMIDATION AT HIS-45</scope>
    <source>
        <tissue>Venom gland</tissue>
    </source>
</reference>
<reference evidence="28" key="2">
    <citation type="submission" date="2008-08" db="EMBL/GenBank/DDBJ databases">
        <title>Molecular cloning of venom protein/peptide precursor transcripts from lyophilized venom cDNA libraries: phospholipase A2, mellitin and apamin from the honeybee (Apis mellifera).</title>
        <authorList>
            <person name="Zhou M."/>
            <person name="Chen Q."/>
            <person name="Chen T."/>
            <person name="Walker B."/>
            <person name="Shaw C."/>
        </authorList>
    </citation>
    <scope>NUCLEOTIDE SEQUENCE [MRNA]</scope>
    <source>
        <tissue>Venom gland</tissue>
    </source>
</reference>
<reference key="3">
    <citation type="journal article" date="1967" name="Hoppe-Seyler's Z. Physiol. Chem.">
        <title>Sequence analysis of bee venom neurotoxin (apamine) from its tryptic and chymotryptic cleavage products.</title>
        <authorList>
            <person name="Haux P."/>
            <person name="Sawerthal H."/>
            <person name="Habermann E."/>
        </authorList>
    </citation>
    <scope>PROTEIN SEQUENCE OF 28-45</scope>
    <scope>SUBUNIT</scope>
    <scope>SUBCELLULAR LOCATION</scope>
    <source>
        <tissue>Venom</tissue>
    </source>
</reference>
<reference key="4">
    <citation type="journal article" date="1967" name="J. Chem. Soc. Chem. Commun.">
        <authorList>
            <person name="Shipolini R."/>
            <person name="Bradbury A.F."/>
            <person name="Callewaert G.L."/>
            <person name="Vernon C.A."/>
        </authorList>
    </citation>
    <scope>PROTEIN SEQUENCE OF 28-45</scope>
    <scope>SUBUNIT</scope>
    <scope>SUBCELLULAR LOCATION</scope>
    <source>
        <tissue>Venom</tissue>
    </source>
</reference>
<reference key="5">
    <citation type="journal article" date="1976" name="Eur. J. Biochem.">
        <title>The peptide components of bee venom.</title>
        <authorList>
            <person name="Gauldie J."/>
            <person name="Hanson J.M."/>
            <person name="Rumjanek F.D."/>
            <person name="Shipolini R.A."/>
            <person name="Vernon C.A."/>
        </authorList>
    </citation>
    <scope>TOXIC DOSE</scope>
</reference>
<reference key="6">
    <citation type="journal article" date="1982" name="Proc. Natl. Acad. Sci. U.S.A.">
        <title>Apamin as a selective blocker of the calcium-dependent potassium channel in neuroblastoma cells: voltage-clamp and biochemical characterization of the toxin receptor.</title>
        <authorList>
            <person name="Hugues M."/>
            <person name="Romey G."/>
            <person name="Duval D."/>
            <person name="Vincent J.P."/>
            <person name="Lazdunski M."/>
        </authorList>
    </citation>
    <scope>FUNCTION</scope>
    <scope>REGION</scope>
</reference>
<reference key="7">
    <citation type="journal article" date="1991" name="Eur. J. Biochem.">
        <title>Binding and toxicity of apamin. Characterization of the active site.</title>
        <authorList>
            <person name="Labee-Jullie C."/>
            <person name="Granier C."/>
            <person name="Alberico F."/>
            <person name="Defendini M.-L."/>
            <person name="Ceard B."/>
            <person name="Rochat H."/>
            <person name="van Rietschoten J."/>
        </authorList>
    </citation>
    <scope>SYNTHESIS</scope>
    <scope>ACTIVITY OF ANALOGS</scope>
    <scope>REGION</scope>
</reference>
<reference key="8">
    <citation type="journal article" date="1997" name="Brain Res.">
        <title>Apamin, a blocker of the calcium-activated potassium channel, induces neurodegeneration of Purkinje cells exclusively.</title>
        <authorList>
            <person name="Mourre C."/>
            <person name="Fournier C."/>
            <person name="Soumireu-Mourat B."/>
        </authorList>
    </citation>
    <scope>FUNCTION</scope>
    <scope>ROLE IN THE NEURODEGENERATION OF PURKINJE CELLS</scope>
</reference>
<reference key="9">
    <citation type="journal article" date="1997" name="J. Biol. Chem.">
        <title>Determinants of apamin and d-tubocurarine block in SK potassium channels.</title>
        <authorList>
            <person name="Ishii T.M."/>
            <person name="Maylie J."/>
            <person name="Adelman J.P."/>
        </authorList>
    </citation>
    <scope>FUNCTION</scope>
</reference>
<reference key="10">
    <citation type="journal article" date="2000" name="Br. J. Pharmacol.">
        <title>Pharmacological characterization of small-conductance Ca(2+)-activated K(+) channels stably expressed in HEK 293 cells.</title>
        <authorList>
            <person name="Stroebaek D."/>
            <person name="Joergensen T.D."/>
            <person name="Christophersen P."/>
            <person name="Ahring P.K."/>
            <person name="Olesen S.P."/>
        </authorList>
    </citation>
    <scope>FUNCTION</scope>
</reference>
<reference key="11">
    <citation type="journal article" date="2001" name="J. Physiol. (Lond.)">
        <title>SK3 is an important component of K(+) channels mediating the afterhyperpolarization in cultured rat SCG neurones.</title>
        <authorList>
            <person name="Hosseini R."/>
            <person name="Benton D.C."/>
            <person name="Dunn P.M."/>
            <person name="Jenkinson D.H."/>
            <person name="Moss G.W."/>
        </authorList>
    </citation>
    <scope>FUNCTION</scope>
</reference>
<reference key="12">
    <citation type="journal article" date="2001" name="Pflugers Arch.">
        <title>Apamin interacts with all subtypes of cloned small-conductance Ca2+-activated K+ channels.</title>
        <authorList>
            <person name="Grunnet M."/>
            <person name="Jensen B.S."/>
            <person name="Olesen S.P."/>
            <person name="Klaerke D.A."/>
        </authorList>
    </citation>
    <scope>FUNCTION</scope>
</reference>
<reference key="13">
    <citation type="journal article" date="2007" name="J. Biol. Chem.">
        <title>An amino acid outside the pore region influences apamin sensitivity in small conductance Ca2+-activated K+ channels.</title>
        <authorList>
            <person name="Nolting A."/>
            <person name="Ferraro T."/>
            <person name="D'hoedt D."/>
            <person name="Stocker M."/>
        </authorList>
    </citation>
    <scope>FUNCTION</scope>
</reference>
<reference key="14">
    <citation type="journal article" date="2010" name="Eur. J. Pharmacol.">
        <title>Apamin reduces neuromuscular transmission by activating inhibitory muscarinic M(2) receptors on motor nerve terminals.</title>
        <authorList>
            <person name="de Matos Silva L.F."/>
            <person name="de Paula Ramos E.R."/>
            <person name="Ambiel C.R."/>
            <person name="Correia-de-Sa P."/>
            <person name="Alves-Do-Prado W."/>
        </authorList>
    </citation>
    <scope>FUNCTION</scope>
</reference>
<reference key="15">
    <citation type="journal article" date="2010" name="J. Biol. Chem.">
        <title>Allosteric block of KCa2 channels by apamin.</title>
        <authorList>
            <person name="Lamy C."/>
            <person name="Goodchild S.J."/>
            <person name="Weatherall K.L."/>
            <person name="Jane D.E."/>
            <person name="Liegeois J.F."/>
            <person name="Seutin V."/>
            <person name="Marrion N.V."/>
        </authorList>
    </citation>
    <scope>FUNCTION</scope>
</reference>
<reference key="16">
    <citation type="journal article" date="2017" name="Eur. Biophys. J.">
        <title>The small neurotoxin apamin blocks not only small conductance Ca2+ activated K+ channels (SK type) but also the voltage dependent Kv1.3 channel.</title>
        <authorList>
            <person name="Voos P."/>
            <person name="Yazar M."/>
            <person name="Lautenschlaeger R."/>
            <person name="Rauh O."/>
            <person name="Moroni A."/>
            <person name="Thiel G."/>
        </authorList>
    </citation>
    <scope>FUNCTION</scope>
</reference>
<reference key="17">
    <citation type="journal article" date="2017" name="Pharmacol. Rep.">
        <title>Apamin inhibits TNF-alpha- and IFN-gamma-induced inflammatory cytokines and chemokines via suppressions of NF-kappaB signaling pathway and STAT in human keratinocytes.</title>
        <authorList>
            <person name="Kim W.H."/>
            <person name="An H.J."/>
            <person name="Kim J.Y."/>
            <person name="Gwon M.G."/>
            <person name="Gu H."/>
            <person name="Lee S.J."/>
            <person name="Park J.Y."/>
            <person name="Park K.D."/>
            <person name="Han S.M."/>
            <person name="Kim M.K."/>
            <person name="Park K.K."/>
        </authorList>
    </citation>
    <scope>ROLE IN SUPPRESSING THE INFLAMMATORY RESPONSE</scope>
</reference>
<reference key="18">
    <citation type="journal article" date="2020" name="Int. J. Mol. Sci.">
        <title>Apamin Suppresses LPS-Induced Neuroinflammatory Responses by Regulating SK Channels and TLR4-Mediated Signaling Pathways.</title>
        <authorList>
            <person name="Park J."/>
            <person name="Jang K.M."/>
            <person name="Park K.K."/>
        </authorList>
    </citation>
    <scope>FUNCTION</scope>
    <scope>ROLE IN SUPPRESSING THE INFLAMMATORY RESPONSE</scope>
</reference>
<reference key="19">
    <citation type="journal article" date="2020" name="J. Ethnopharmacol.">
        <title>Apamin from bee venom suppresses inflammation in a murine model of gouty arthritis.</title>
        <authorList>
            <person name="Lee Y.M."/>
            <person name="Cho S.N."/>
            <person name="Son E."/>
            <person name="Song C.H."/>
            <person name="Kim D.S."/>
        </authorList>
    </citation>
    <scope>ROLE IN SUPPRESSING THE INFLAMMATORY RESPONSE</scope>
</reference>
<reference key="20">
    <citation type="journal article" date="2020" name="Molecules">
        <title>Antioxidative, Antiapoptotic, and Anti-Inflammatory Effects of Apamin in a Murine Model of Lipopolysaccharide-Induced Acute Kidney Injury.</title>
        <authorList>
            <person name="Kim J.Y."/>
            <person name="Leem J."/>
            <person name="Park K.K."/>
        </authorList>
    </citation>
    <scope>ROLE IN SUPPRESSING THE INFLAMMATORY RESPONSE</scope>
</reference>
<reference key="21">
    <citation type="journal article" date="1988" name="Biochemistry">
        <title>Solution structure of apamin determined by nuclear magnetic resonance and distance geometry.</title>
        <authorList>
            <person name="Pease J.H.B."/>
            <person name="Wemmer D.E."/>
        </authorList>
    </citation>
    <scope>STRUCTURE BY NMR OF 28-45</scope>
    <scope>DISULFIDE BOND</scope>
</reference>
<reference key="22">
    <citation type="journal article" date="1991" name="Mol. Biol. (Mosk.)">
        <title>Spatial structure of apamin in solution.</title>
        <authorList>
            <person name="Andrianov A.M."/>
            <person name="Akhrem A.A."/>
        </authorList>
    </citation>
    <scope>STRUCTURE BY NMR OF 28-45</scope>
    <scope>DISULFIDE BOND</scope>
</reference>
<reference evidence="29" key="23">
    <citation type="journal article" date="2022" name="Front. Pharmacol.">
        <title>Apamin structure and pharmacology revisited.</title>
        <authorList>
            <person name="Kuzmenkov A.I."/>
            <person name="Peigneur S."/>
            <person name="Nasburg J.A."/>
            <person name="Mineev K.S."/>
            <person name="Nikolaev M.V."/>
            <person name="Pinheiro-Junior E.L."/>
            <person name="Arseniev A.S."/>
            <person name="Wulff H."/>
            <person name="Tytgat J."/>
            <person name="Vassilevski A.A."/>
        </authorList>
    </citation>
    <scope>STRUCTURE BY NMR OF 28-45</scope>
    <scope>FUNCTION</scope>
    <scope>MASS SPECTROMETRY</scope>
    <scope>DISULFIDE BONDS</scope>
    <source>
        <tissue>Venom</tissue>
    </source>
</reference>
<comment type="function">
    <text evidence="1 2 3 5 7 9 10 11 12 14 15 16 18 19 20">Toxin with unique selectivity to KCa2 channels (PubMed:10696100, PubMed:11212219, PubMed:11533126, PubMed:17142458, PubMed:20562108, PubMed:32560481, PubMed:36188602, PubMed:6122211, PubMed:9287325, PubMed:9459560). Potently blocks human, rat and mouse KCa2.2/KCNN2/SK2 channels (IC(50)=27-140 pM), and moderately blocks human and rat KCa2.3/KCNN3/SK3 channels (IC(50)=0.6-4 nM), and human (IC(50)=0.7-12 nM) and mouse (IC(50)=28 nM) KCa2.1/KCNN1/SK1 channels (PubMed:10696100, PubMed:11212219, PubMed:11533126, PubMed:17142458, PubMed:20562108, PubMed:36188602, PubMed:9287325, PubMed:9459560). Does not show any antimicrobial activity (PubMed:36188602). In vivo, intracerebroventricular injection into rats of a dose of 1 ng results in neurodegeneration specifically in the Purkinje cells of the cerebellum, and induces seizures characterized by hypersensitivity to noise, loss of postural control, paroxystic jerking, and alternating periods of great agitation with tonic-clonic convulsions and periods of total prostration (PubMed:9459560). When administered at high doses, exerts anti-inflammatory, anti-oxidative, anti-fibrotic and anti-apoptotic properties in several models of inflammatory disease, including gouty arthritis, atherosclerosis, atopic dermatitis and acute kidney injury (PubMed:28958612, PubMed:32289477, PubMed:32560481, PubMed:33287398). Down-regulates pro-inflammatory signaling pathways, such as the NF-kappaB and STAT3 pathways, probably by blocking SK channels such as KCa2.2/KCNN2/SK2 and/or KCa2.3/KCNN3/SK3 which are thought to be involved in promoting some inflammatory responses (PubMed:28958612, PubMed:32289477, PubMed:32560481, PubMed:33287398). For example in mouse and rat microglia cells, inhibits LPS-activated KCa2.2/KCNN2/SK2 channels and TLR4 expression leading to the down-regulation of the NF-kappaB, STAT, and MAPK/ERK signaling pathways and, as a consequence, decreases secretion of pro-inflammatory cytokines (PubMed:32560481).</text>
</comment>
<comment type="subcellular location">
    <subcellularLocation>
        <location evidence="17 21">Secreted</location>
    </subcellularLocation>
</comment>
<comment type="tissue specificity">
    <text evidence="27">Expressed by the venom gland.</text>
</comment>
<comment type="mass spectrometry" mass="2026.7" method="MALDI" evidence="16">
    <text>Monoisotopic mass.</text>
</comment>
<comment type="toxic dose">
    <text evidence="4">LD(50) is 3-5 mg/kg by intravenous injection into mice.</text>
</comment>
<comment type="miscellaneous">
    <text evidence="16">Negative results: No activity has been detected against the following channels: KCa1.1/KCNMA1 and KCa3.1/KCNN4/IK/SK4, Kir3.1/3.2, 15 voltage-gated potassium channels (Kv), 10 voltage-gated sodium channels (Nav), TRPV1, three ASIC, three types of glutamate receptors, and three nicotinic acetylcholine receptors (nAChR).</text>
</comment>
<protein>
    <recommendedName>
        <fullName evidence="22 23 25">Apamin</fullName>
        <shortName evidence="24">APM</shortName>
    </recommendedName>
    <alternativeName>
        <fullName evidence="26">Apamine</fullName>
    </alternativeName>
</protein>
<proteinExistence type="evidence at protein level"/>
<name>APAM_APIME</name>
<keyword id="KW-0002">3D-structure</keyword>
<keyword id="KW-0027">Amidation</keyword>
<keyword id="KW-1221">Calcium-activated potassium channel impairing toxin</keyword>
<keyword id="KW-0903">Direct protein sequencing</keyword>
<keyword id="KW-1015">Disulfide bond</keyword>
<keyword id="KW-0872">Ion channel impairing toxin</keyword>
<keyword id="KW-0528">Neurotoxin</keyword>
<keyword id="KW-0632">Potassium channel impairing toxin</keyword>
<keyword id="KW-1185">Reference proteome</keyword>
<keyword id="KW-0964">Secreted</keyword>
<keyword id="KW-0732">Signal</keyword>
<keyword id="KW-0800">Toxin</keyword>
<keyword id="KW-1220">Voltage-gated potassium channel impairing toxin</keyword>
<organism>
    <name type="scientific">Apis mellifera</name>
    <name type="common">Honeybee</name>
    <dbReference type="NCBI Taxonomy" id="7460"/>
    <lineage>
        <taxon>Eukaryota</taxon>
        <taxon>Metazoa</taxon>
        <taxon>Ecdysozoa</taxon>
        <taxon>Arthropoda</taxon>
        <taxon>Hexapoda</taxon>
        <taxon>Insecta</taxon>
        <taxon>Pterygota</taxon>
        <taxon>Neoptera</taxon>
        <taxon>Endopterygota</taxon>
        <taxon>Hymenoptera</taxon>
        <taxon>Apocrita</taxon>
        <taxon>Aculeata</taxon>
        <taxon>Apoidea</taxon>
        <taxon>Anthophila</taxon>
        <taxon>Apidae</taxon>
        <taxon>Apis</taxon>
    </lineage>
</organism>
<evidence type="ECO:0000269" key="1">
    <source>
    </source>
</evidence>
<evidence type="ECO:0000269" key="2">
    <source>
    </source>
</evidence>
<evidence type="ECO:0000269" key="3">
    <source>
    </source>
</evidence>
<evidence type="ECO:0000269" key="4">
    <source>
    </source>
</evidence>
<evidence type="ECO:0000269" key="5">
    <source>
    </source>
</evidence>
<evidence type="ECO:0000269" key="6">
    <source>
    </source>
</evidence>
<evidence type="ECO:0000269" key="7">
    <source>
    </source>
</evidence>
<evidence type="ECO:0000269" key="8">
    <source>
    </source>
</evidence>
<evidence type="ECO:0000269" key="9">
    <source>
    </source>
</evidence>
<evidence type="ECO:0000269" key="10">
    <source>
    </source>
</evidence>
<evidence type="ECO:0000269" key="11">
    <source>
    </source>
</evidence>
<evidence type="ECO:0000269" key="12">
    <source>
    </source>
</evidence>
<evidence type="ECO:0000269" key="13">
    <source>
    </source>
</evidence>
<evidence type="ECO:0000269" key="14">
    <source>
    </source>
</evidence>
<evidence type="ECO:0000269" key="15">
    <source>
    </source>
</evidence>
<evidence type="ECO:0000269" key="16">
    <source>
    </source>
</evidence>
<evidence type="ECO:0000269" key="17">
    <source>
    </source>
</evidence>
<evidence type="ECO:0000269" key="18">
    <source>
    </source>
</evidence>
<evidence type="ECO:0000269" key="19">
    <source>
    </source>
</evidence>
<evidence type="ECO:0000269" key="20">
    <source>
    </source>
</evidence>
<evidence type="ECO:0000269" key="21">
    <source ref="4"/>
</evidence>
<evidence type="ECO:0000303" key="22">
    <source>
    </source>
</evidence>
<evidence type="ECO:0000303" key="23">
    <source>
    </source>
</evidence>
<evidence type="ECO:0000303" key="24">
    <source>
    </source>
</evidence>
<evidence type="ECO:0000303" key="25">
    <source>
    </source>
</evidence>
<evidence type="ECO:0000303" key="26">
    <source>
    </source>
</evidence>
<evidence type="ECO:0000305" key="27">
    <source>
    </source>
</evidence>
<evidence type="ECO:0000312" key="28">
    <source>
        <dbReference type="EMBL" id="CAR56721.1"/>
    </source>
</evidence>
<evidence type="ECO:0000312" key="29">
    <source>
        <dbReference type="PDB" id="7OXF"/>
    </source>
</evidence>
<evidence type="ECO:0007744" key="30">
    <source>
        <dbReference type="PDB" id="7OXF"/>
    </source>
</evidence>
<evidence type="ECO:0007829" key="31">
    <source>
        <dbReference type="PDB" id="7OXF"/>
    </source>
</evidence>
<feature type="signal peptide" evidence="17 21">
    <location>
        <begin position="1"/>
        <end position="27"/>
    </location>
</feature>
<feature type="peptide" id="PRO_0000018611" description="Apamin" evidence="17 21">
    <location>
        <begin position="28"/>
        <end position="45"/>
    </location>
</feature>
<feature type="region of interest" description="Essential for toxin activity" evidence="8 18">
    <location>
        <begin position="40"/>
        <end position="41"/>
    </location>
</feature>
<feature type="modified residue" description="Histidine amide" evidence="27">
    <location>
        <position position="45"/>
    </location>
</feature>
<feature type="disulfide bond" evidence="6 13 30">
    <location>
        <begin position="28"/>
        <end position="38"/>
    </location>
</feature>
<feature type="disulfide bond" evidence="6 13 30">
    <location>
        <begin position="30"/>
        <end position="42"/>
    </location>
</feature>
<feature type="strand" evidence="31">
    <location>
        <begin position="30"/>
        <end position="32"/>
    </location>
</feature>
<feature type="helix" evidence="31">
    <location>
        <begin position="36"/>
        <end position="43"/>
    </location>
</feature>
<accession>P01500</accession>
<accession>B7UUK0</accession>
<dbReference type="EMBL" id="S78458">
    <property type="protein sequence ID" value="AAB34402.1"/>
    <property type="molecule type" value="mRNA"/>
</dbReference>
<dbReference type="EMBL" id="FM203120">
    <property type="protein sequence ID" value="CAR56721.1"/>
    <property type="molecule type" value="mRNA"/>
</dbReference>
<dbReference type="PIR" id="A56710">
    <property type="entry name" value="AMHB"/>
</dbReference>
<dbReference type="RefSeq" id="NP_001011612.1">
    <property type="nucleotide sequence ID" value="NM_001011612.1"/>
</dbReference>
<dbReference type="PDB" id="7OXF">
    <property type="method" value="NMR"/>
    <property type="chains" value="A=28-45"/>
</dbReference>
<dbReference type="PDBsum" id="7OXF"/>
<dbReference type="BMRB" id="P01500"/>
<dbReference type="SMR" id="P01500"/>
<dbReference type="STRING" id="7460.P01500"/>
<dbReference type="BindingDB" id="P01500"/>
<dbReference type="PaxDb" id="7460-GB40697-PA"/>
<dbReference type="EnsemblMetazoa" id="NM_001011612">
    <property type="protein sequence ID" value="NP_001011612"/>
    <property type="gene ID" value="GeneID_406135"/>
</dbReference>
<dbReference type="GeneID" id="406135"/>
<dbReference type="KEGG" id="ame:406135"/>
<dbReference type="CTD" id="406135"/>
<dbReference type="HOGENOM" id="CLU_214040_0_0_1"/>
<dbReference type="InParanoid" id="P01500"/>
<dbReference type="OrthoDB" id="10280585at2759"/>
<dbReference type="Proteomes" id="UP000005203">
    <property type="component" value="Linkage group LG12"/>
</dbReference>
<dbReference type="GO" id="GO:0005576">
    <property type="term" value="C:extracellular region"/>
    <property type="evidence" value="ECO:0007669"/>
    <property type="project" value="UniProtKB-SubCell"/>
</dbReference>
<dbReference type="GO" id="GO:0070320">
    <property type="term" value="F:inward rectifier potassium channel inhibitor activity"/>
    <property type="evidence" value="ECO:0000314"/>
    <property type="project" value="UniProtKB"/>
</dbReference>
<dbReference type="GO" id="GO:0019870">
    <property type="term" value="F:potassium channel inhibitor activity"/>
    <property type="evidence" value="ECO:0000314"/>
    <property type="project" value="UniProtKB"/>
</dbReference>
<dbReference type="GO" id="GO:0090729">
    <property type="term" value="F:toxin activity"/>
    <property type="evidence" value="ECO:0000314"/>
    <property type="project" value="UniProtKB"/>
</dbReference>
<dbReference type="GO" id="GO:1903609">
    <property type="term" value="P:negative regulation of inward rectifier potassium channel activity"/>
    <property type="evidence" value="ECO:0000314"/>
    <property type="project" value="UniProtKB"/>
</dbReference>
<dbReference type="GO" id="GO:1901380">
    <property type="term" value="P:negative regulation of potassium ion transmembrane transport"/>
    <property type="evidence" value="ECO:0000314"/>
    <property type="project" value="UniProtKB"/>
</dbReference>
<dbReference type="GO" id="GO:1901017">
    <property type="term" value="P:negative regulation of potassium ion transmembrane transporter activity"/>
    <property type="evidence" value="ECO:0000314"/>
    <property type="project" value="UniProtKB"/>
</dbReference>
<dbReference type="GO" id="GO:0035738">
    <property type="term" value="P:venom-mediated perturbation of biological process"/>
    <property type="evidence" value="ECO:0000314"/>
    <property type="project" value="UniProtKB"/>
</dbReference>
<dbReference type="InterPro" id="IPR035361">
    <property type="entry name" value="Bee_toxin"/>
</dbReference>
<dbReference type="Pfam" id="PF17454">
    <property type="entry name" value="Bee_toxin"/>
    <property type="match status" value="1"/>
</dbReference>
<sequence length="46" mass="5223">MISMLRCIYLFLSVILITSYFVTPVMPCNCKAPETALCARRCQQHG</sequence>